<reference key="1">
    <citation type="journal article" date="1989" name="J. Gen. Virol.">
        <title>The outer capsid protein of rice dwarf virus is encoded by genome segment S8.</title>
        <authorList>
            <person name="Omura T."/>
            <person name="Ishikawa K."/>
            <person name="Hirano H."/>
            <person name="Ugaki M."/>
            <person name="Minobe Y."/>
            <person name="Tsuchizaki T."/>
            <person name="Kato H."/>
        </authorList>
    </citation>
    <scope>NUCLEOTIDE SEQUENCE [GENOMIC RNA]</scope>
</reference>
<reference key="2">
    <citation type="journal article" date="2003" name="Structure">
        <title>The atomic structure of rice dwarf virus reveals the self-assembly mechanism of component proteins.</title>
        <authorList>
            <person name="Nakagawa A."/>
            <person name="Miyazaki N."/>
            <person name="Taka J."/>
            <person name="Naitow H."/>
            <person name="Ogawa A."/>
            <person name="Fujimoto Z."/>
            <person name="Mizuno H."/>
            <person name="Higashi T."/>
            <person name="Watanabe Y."/>
            <person name="Omura T."/>
            <person name="Cheng R.H."/>
            <person name="Tsukihara T."/>
        </authorList>
    </citation>
    <scope>X-RAY CRYSTALLOGRAPHY (3.5 ANGSTROMS)</scope>
</reference>
<feature type="chain" id="PRO_0000040674" description="Outer capsid protein P8">
    <location>
        <begin position="1"/>
        <end position="420"/>
    </location>
</feature>
<feature type="chain" id="PRO_0000040675" description="Outer capsid protein P8'">
    <location>
        <begin position="1"/>
        <end position="361"/>
    </location>
</feature>
<feature type="chain" id="PRO_0000040676" description="Small peptide 1">
    <location>
        <begin position="362"/>
        <end position="420"/>
    </location>
</feature>
<feature type="helix" evidence="3">
    <location>
        <begin position="3"/>
        <end position="22"/>
    </location>
</feature>
<feature type="turn" evidence="3">
    <location>
        <begin position="23"/>
        <end position="25"/>
    </location>
</feature>
<feature type="helix" evidence="3">
    <location>
        <begin position="34"/>
        <end position="44"/>
    </location>
</feature>
<feature type="helix" evidence="3">
    <location>
        <begin position="58"/>
        <end position="73"/>
    </location>
</feature>
<feature type="turn" evidence="3">
    <location>
        <begin position="75"/>
        <end position="77"/>
    </location>
</feature>
<feature type="helix" evidence="3">
    <location>
        <begin position="78"/>
        <end position="82"/>
    </location>
</feature>
<feature type="helix" evidence="3">
    <location>
        <begin position="84"/>
        <end position="88"/>
    </location>
</feature>
<feature type="helix" evidence="3">
    <location>
        <begin position="98"/>
        <end position="102"/>
    </location>
</feature>
<feature type="helix" evidence="3">
    <location>
        <begin position="112"/>
        <end position="121"/>
    </location>
</feature>
<feature type="strand" evidence="3">
    <location>
        <begin position="123"/>
        <end position="125"/>
    </location>
</feature>
<feature type="helix" evidence="3">
    <location>
        <begin position="132"/>
        <end position="141"/>
    </location>
</feature>
<feature type="helix" evidence="3">
    <location>
        <begin position="153"/>
        <end position="156"/>
    </location>
</feature>
<feature type="helix" evidence="3">
    <location>
        <begin position="169"/>
        <end position="173"/>
    </location>
</feature>
<feature type="strand" evidence="3">
    <location>
        <begin position="183"/>
        <end position="186"/>
    </location>
</feature>
<feature type="strand" evidence="3">
    <location>
        <begin position="188"/>
        <end position="195"/>
    </location>
</feature>
<feature type="strand" evidence="3">
    <location>
        <begin position="203"/>
        <end position="208"/>
    </location>
</feature>
<feature type="turn" evidence="3">
    <location>
        <begin position="212"/>
        <end position="216"/>
    </location>
</feature>
<feature type="strand" evidence="3">
    <location>
        <begin position="217"/>
        <end position="226"/>
    </location>
</feature>
<feature type="strand" evidence="3">
    <location>
        <begin position="250"/>
        <end position="253"/>
    </location>
</feature>
<feature type="strand" evidence="3">
    <location>
        <begin position="256"/>
        <end position="265"/>
    </location>
</feature>
<feature type="strand" evidence="3">
    <location>
        <begin position="268"/>
        <end position="272"/>
    </location>
</feature>
<feature type="strand" evidence="3">
    <location>
        <begin position="277"/>
        <end position="283"/>
    </location>
</feature>
<feature type="strand" evidence="3">
    <location>
        <begin position="285"/>
        <end position="298"/>
    </location>
</feature>
<feature type="helix" evidence="3">
    <location>
        <begin position="304"/>
        <end position="307"/>
    </location>
</feature>
<feature type="turn" evidence="3">
    <location>
        <begin position="308"/>
        <end position="311"/>
    </location>
</feature>
<feature type="strand" evidence="3">
    <location>
        <begin position="314"/>
        <end position="316"/>
    </location>
</feature>
<feature type="helix" evidence="3">
    <location>
        <begin position="324"/>
        <end position="336"/>
    </location>
</feature>
<feature type="helix" evidence="3">
    <location>
        <begin position="340"/>
        <end position="358"/>
    </location>
</feature>
<feature type="turn" evidence="3">
    <location>
        <begin position="361"/>
        <end position="363"/>
    </location>
</feature>
<feature type="helix" evidence="3">
    <location>
        <begin position="378"/>
        <end position="385"/>
    </location>
</feature>
<feature type="helix" evidence="3">
    <location>
        <begin position="393"/>
        <end position="413"/>
    </location>
</feature>
<feature type="helix" evidence="3">
    <location>
        <begin position="414"/>
        <end position="416"/>
    </location>
</feature>
<sequence length="420" mass="46425">MSRQMWLDTSALLEAISEYVVRCNGDTFSGLTTGDFNALSNMFTQLSVSSAGYVSDPRVPLQTMSNMFVSFITSTDRCGYMLRKTWFNSDTKPTVSDDFITTYIRPRLQVPMSDTVRQLNNLSLQPSAKPKLYERQNAIMKGLDIPYSEPIEPCKLFRSVAGQTGNIPMMGILATPPAQQQPFFVAERRRILFGIRSNAAIPAGAYQFVVPAWASVLSVTGAYVYFTNSFFGTIIAGVTATATAADAATTFTVPTDANNLPVQTDSRLSFSLGGGNINLELGVAKTGFCVAIEGEFTILANRSQAYYTLNSITQTPTSIDDFDVSDFLTTFLSQLRACGQYEIFSDAMDQLTNSLITNYMDPPAIPAGLAFTSPWFRFSERARTILALQNVDLNIRKLIVRHLWVITSLIAVFGRYYRPN</sequence>
<proteinExistence type="evidence at protein level"/>
<comment type="function">
    <text>Capsid protein which self-assembles to form the outer icosahedral capsid with a T=13 symmetry, about 70 nm in diameter and consisting of 780 molecules capsid proteins.</text>
</comment>
<comment type="subunit">
    <text evidence="1">Homotrimer. Homomultimer. Interacts with host peroxisomal glycolate oxidase (GOX). This interaction mediates its relocation to virus factories peripheral to host peroxisomes (By similarity).</text>
</comment>
<comment type="subcellular location">
    <molecule>Outer capsid protein P8</molecule>
    <subcellularLocation>
        <location evidence="2">Virion</location>
    </subcellularLocation>
    <subcellularLocation>
        <location evidence="1">Host cytoplasm</location>
    </subcellularLocation>
    <text evidence="1">Found in the peripheral regions of spherical cytoplasmic structures, called virus factories, that appear early after infection and are the site of viral replication and packaging.</text>
</comment>
<comment type="similarity">
    <text evidence="2">Belongs to the phytoreovirus outer capsid protein P8 family.</text>
</comment>
<organismHost>
    <name type="scientific">Alopecurus aequalis</name>
    <dbReference type="NCBI Taxonomy" id="114194"/>
</organismHost>
<organismHost>
    <name type="scientific">Echinochloa crus-galli</name>
    <name type="common">Barnyard grass</name>
    <name type="synonym">Panicum crus-galli</name>
    <dbReference type="NCBI Taxonomy" id="90397"/>
</organismHost>
<organismHost>
    <name type="scientific">Nephotettix cincticeps</name>
    <name type="common">Green rice leafhopper</name>
    <name type="synonym">Selenocephalus cincticeps</name>
    <dbReference type="NCBI Taxonomy" id="94400"/>
</organismHost>
<organismHost>
    <name type="scientific">Oryza sativa</name>
    <name type="common">Rice</name>
    <dbReference type="NCBI Taxonomy" id="4530"/>
</organismHost>
<organismHost>
    <name type="scientific">Paspalum</name>
    <dbReference type="NCBI Taxonomy" id="147271"/>
</organismHost>
<organism>
    <name type="scientific">Rice dwarf virus (isolate O)</name>
    <name type="common">RDV</name>
    <dbReference type="NCBI Taxonomy" id="142805"/>
    <lineage>
        <taxon>Viruses</taxon>
        <taxon>Riboviria</taxon>
        <taxon>Orthornavirae</taxon>
        <taxon>Duplornaviricota</taxon>
        <taxon>Resentoviricetes</taxon>
        <taxon>Reovirales</taxon>
        <taxon>Sedoreoviridae</taxon>
        <taxon>Phytoreovirus</taxon>
        <taxon>Rice dwarf virus</taxon>
    </lineage>
</organism>
<evidence type="ECO:0000250" key="1"/>
<evidence type="ECO:0000305" key="2"/>
<evidence type="ECO:0007829" key="3">
    <source>
        <dbReference type="PDB" id="1UF2"/>
    </source>
</evidence>
<keyword id="KW-0002">3D-structure</keyword>
<keyword id="KW-0167">Capsid protein</keyword>
<keyword id="KW-1035">Host cytoplasm</keyword>
<keyword id="KW-0945">Host-virus interaction</keyword>
<keyword id="KW-1152">Outer capsid protein</keyword>
<keyword id="KW-0946">Virion</keyword>
<accession>P17379</accession>
<dbReference type="EMBL" id="D00536">
    <property type="protein sequence ID" value="BAA00424.1"/>
    <property type="molecule type" value="Genomic_RNA"/>
</dbReference>
<dbReference type="PIR" id="JQ0105">
    <property type="entry name" value="MWXRRD"/>
</dbReference>
<dbReference type="PDB" id="1UF2">
    <property type="method" value="X-ray"/>
    <property type="resolution" value="3.50 A"/>
    <property type="chains" value="C/D/E/F/G/H/I/J/P/Q/R/S/T=1-420"/>
</dbReference>
<dbReference type="PDBsum" id="1UF2"/>
<dbReference type="SMR" id="P17379"/>
<dbReference type="EvolutionaryTrace" id="P17379"/>
<dbReference type="GO" id="GO:0030430">
    <property type="term" value="C:host cell cytoplasm"/>
    <property type="evidence" value="ECO:0000250"/>
    <property type="project" value="UniProtKB"/>
</dbReference>
<dbReference type="GO" id="GO:0044161">
    <property type="term" value="C:host cell cytoplasmic vesicle"/>
    <property type="evidence" value="ECO:0000250"/>
    <property type="project" value="UniProtKB"/>
</dbReference>
<dbReference type="GO" id="GO:0019031">
    <property type="term" value="C:viral envelope"/>
    <property type="evidence" value="ECO:0007669"/>
    <property type="project" value="InterPro"/>
</dbReference>
<dbReference type="GO" id="GO:0039624">
    <property type="term" value="C:viral outer capsid"/>
    <property type="evidence" value="ECO:0007669"/>
    <property type="project" value="UniProtKB-KW"/>
</dbReference>
<dbReference type="GO" id="GO:0046789">
    <property type="term" value="F:host cell surface receptor binding"/>
    <property type="evidence" value="ECO:0007669"/>
    <property type="project" value="InterPro"/>
</dbReference>
<dbReference type="GO" id="GO:0005198">
    <property type="term" value="F:structural molecule activity"/>
    <property type="evidence" value="ECO:0007669"/>
    <property type="project" value="InterPro"/>
</dbReference>
<dbReference type="GO" id="GO:0019064">
    <property type="term" value="P:fusion of virus membrane with host plasma membrane"/>
    <property type="evidence" value="ECO:0007669"/>
    <property type="project" value="InterPro"/>
</dbReference>
<dbReference type="GO" id="GO:0046718">
    <property type="term" value="P:symbiont entry into host cell"/>
    <property type="evidence" value="ECO:0000250"/>
    <property type="project" value="UniProtKB"/>
</dbReference>
<dbReference type="Gene3D" id="2.60.120.170">
    <property type="match status" value="1"/>
</dbReference>
<dbReference type="InterPro" id="IPR008980">
    <property type="entry name" value="Capsid_hemagglutn"/>
</dbReference>
<dbReference type="InterPro" id="IPR009807">
    <property type="entry name" value="Phytoreo_P8"/>
</dbReference>
<dbReference type="InterPro" id="IPR008935">
    <property type="entry name" value="Virus_capsid_a-hlx_vir"/>
</dbReference>
<dbReference type="Pfam" id="PF07124">
    <property type="entry name" value="Phytoreo_P8"/>
    <property type="match status" value="1"/>
</dbReference>
<dbReference type="SUPFAM" id="SSF48345">
    <property type="entry name" value="A virus capsid protein alpha-helical domain"/>
    <property type="match status" value="1"/>
</dbReference>
<dbReference type="SUPFAM" id="SSF49818">
    <property type="entry name" value="Viral protein domain"/>
    <property type="match status" value="1"/>
</dbReference>
<protein>
    <recommendedName>
        <fullName>Outer capsid protein P8</fullName>
    </recommendedName>
    <alternativeName>
        <fullName>Structural protein P8</fullName>
    </alternativeName>
    <component>
        <recommendedName>
            <fullName>Outer capsid protein P8'</fullName>
        </recommendedName>
    </component>
    <component>
        <recommendedName>
            <fullName>Small peptide 1</fullName>
            <shortName>Sp1</shortName>
        </recommendedName>
    </component>
</protein>
<name>P8_RDVO</name>